<dbReference type="EMBL" id="DQ012076">
    <property type="protein sequence ID" value="AAY59806.1"/>
    <property type="molecule type" value="mRNA"/>
</dbReference>
<dbReference type="RefSeq" id="NP_001123241.1">
    <property type="nucleotide sequence ID" value="NM_001129769.1"/>
</dbReference>
<dbReference type="RefSeq" id="XP_016793116.1">
    <property type="nucleotide sequence ID" value="XM_016937627.2"/>
</dbReference>
<dbReference type="RefSeq" id="XP_016793117.1">
    <property type="nucleotide sequence ID" value="XM_016937628.4"/>
</dbReference>
<dbReference type="RefSeq" id="XP_016793118.1">
    <property type="nucleotide sequence ID" value="XM_016937629.2"/>
</dbReference>
<dbReference type="RefSeq" id="XP_016802566.1">
    <property type="nucleotide sequence ID" value="XM_016947077.1"/>
</dbReference>
<dbReference type="RefSeq" id="XP_016802567.1">
    <property type="nucleotide sequence ID" value="XM_016947078.1"/>
</dbReference>
<dbReference type="RefSeq" id="XP_016802568.1">
    <property type="nucleotide sequence ID" value="XM_016947079.1"/>
</dbReference>
<dbReference type="SMR" id="Q30KK4"/>
<dbReference type="STRING" id="9598.ENSPTRP00000022893"/>
<dbReference type="PaxDb" id="9598-ENSPTRP00000022893"/>
<dbReference type="Ensembl" id="ENSPTRT00000024803.3">
    <property type="protein sequence ID" value="ENSPTRP00000022893.2"/>
    <property type="gene ID" value="ENSPTRG00000013353.3"/>
</dbReference>
<dbReference type="GeneID" id="742102"/>
<dbReference type="KEGG" id="ptr:742102"/>
<dbReference type="CTD" id="245937"/>
<dbReference type="VGNC" id="VGNC:6092">
    <property type="gene designation" value="DEFB124"/>
</dbReference>
<dbReference type="eggNOG" id="ENOG502TF15">
    <property type="taxonomic scope" value="Eukaryota"/>
</dbReference>
<dbReference type="GeneTree" id="ENSGT00530000064308"/>
<dbReference type="HOGENOM" id="CLU_181906_4_0_1"/>
<dbReference type="InParanoid" id="Q30KK4"/>
<dbReference type="OMA" id="FMHLCPD"/>
<dbReference type="Proteomes" id="UP000002277">
    <property type="component" value="Chromosome 20"/>
</dbReference>
<dbReference type="Bgee" id="ENSPTRG00000013353">
    <property type="expression patterns" value="Expressed in testis and 5 other cell types or tissues"/>
</dbReference>
<dbReference type="GO" id="GO:0005576">
    <property type="term" value="C:extracellular region"/>
    <property type="evidence" value="ECO:0007669"/>
    <property type="project" value="UniProtKB-SubCell"/>
</dbReference>
<dbReference type="GO" id="GO:0042742">
    <property type="term" value="P:defense response to bacterium"/>
    <property type="evidence" value="ECO:0007669"/>
    <property type="project" value="UniProtKB-KW"/>
</dbReference>
<dbReference type="GO" id="GO:0045087">
    <property type="term" value="P:innate immune response"/>
    <property type="evidence" value="ECO:0007669"/>
    <property type="project" value="InterPro"/>
</dbReference>
<dbReference type="Gene3D" id="3.10.360.10">
    <property type="entry name" value="Antimicrobial Peptide, Beta-defensin 2, Chain A"/>
    <property type="match status" value="1"/>
</dbReference>
<dbReference type="InterPro" id="IPR025933">
    <property type="entry name" value="Beta_defensin_dom"/>
</dbReference>
<dbReference type="PANTHER" id="PTHR47897">
    <property type="entry name" value="BETA-DEFENSIN 124"/>
    <property type="match status" value="1"/>
</dbReference>
<dbReference type="PANTHER" id="PTHR47897:SF1">
    <property type="entry name" value="BETA-DEFENSIN 124"/>
    <property type="match status" value="1"/>
</dbReference>
<dbReference type="Pfam" id="PF13841">
    <property type="entry name" value="Defensin_beta_2"/>
    <property type="match status" value="1"/>
</dbReference>
<reference key="1">
    <citation type="journal article" date="2005" name="Physiol. Genomics">
        <title>Cross-species analysis of the mammalian beta-defensin gene family: presence of syntenic gene clusters and preferential expression in the male reproductive tract.</title>
        <authorList>
            <person name="Patil A.A."/>
            <person name="Cai Y."/>
            <person name="Sang Y."/>
            <person name="Blecha F."/>
            <person name="Zhang G."/>
        </authorList>
    </citation>
    <scope>NUCLEOTIDE SEQUENCE [MRNA]</scope>
</reference>
<accession>Q30KK4</accession>
<keyword id="KW-0044">Antibiotic</keyword>
<keyword id="KW-0929">Antimicrobial</keyword>
<keyword id="KW-0211">Defensin</keyword>
<keyword id="KW-1015">Disulfide bond</keyword>
<keyword id="KW-1185">Reference proteome</keyword>
<keyword id="KW-0964">Secreted</keyword>
<keyword id="KW-0732">Signal</keyword>
<feature type="signal peptide" evidence="2">
    <location>
        <begin position="1"/>
        <end position="22"/>
    </location>
</feature>
<feature type="chain" id="PRO_0000045353" description="Beta-defensin 124">
    <location>
        <begin position="23"/>
        <end position="71"/>
    </location>
</feature>
<feature type="disulfide bond" evidence="1">
    <location>
        <begin position="27"/>
        <end position="54"/>
    </location>
</feature>
<feature type="disulfide bond" evidence="1">
    <location>
        <begin position="34"/>
        <end position="48"/>
    </location>
</feature>
<feature type="disulfide bond" evidence="1">
    <location>
        <begin position="38"/>
        <end position="55"/>
    </location>
</feature>
<evidence type="ECO:0000250" key="1"/>
<evidence type="ECO:0000255" key="2"/>
<evidence type="ECO:0000305" key="3"/>
<comment type="function">
    <text evidence="3">Has antibacterial activity.</text>
</comment>
<comment type="subcellular location">
    <subcellularLocation>
        <location evidence="3">Secreted</location>
    </subcellularLocation>
</comment>
<comment type="similarity">
    <text evidence="3">Belongs to the beta-defensin family.</text>
</comment>
<protein>
    <recommendedName>
        <fullName>Beta-defensin 124</fullName>
    </recommendedName>
    <alternativeName>
        <fullName>Defensin, beta 124</fullName>
    </alternativeName>
</protein>
<gene>
    <name type="primary">DEFB124</name>
</gene>
<sequence length="71" mass="8087">MTQLLLFLVALLVLGHVPSGRSEFKRCWKGQGACRTYCTRQETYMHLCPDASLCCLSYALKPPPVPKHEYE</sequence>
<organism>
    <name type="scientific">Pan troglodytes</name>
    <name type="common">Chimpanzee</name>
    <dbReference type="NCBI Taxonomy" id="9598"/>
    <lineage>
        <taxon>Eukaryota</taxon>
        <taxon>Metazoa</taxon>
        <taxon>Chordata</taxon>
        <taxon>Craniata</taxon>
        <taxon>Vertebrata</taxon>
        <taxon>Euteleostomi</taxon>
        <taxon>Mammalia</taxon>
        <taxon>Eutheria</taxon>
        <taxon>Euarchontoglires</taxon>
        <taxon>Primates</taxon>
        <taxon>Haplorrhini</taxon>
        <taxon>Catarrhini</taxon>
        <taxon>Hominidae</taxon>
        <taxon>Pan</taxon>
    </lineage>
</organism>
<name>DB124_PANTR</name>
<proteinExistence type="inferred from homology"/>